<sequence length="1065" mass="122836">MVAYLNIHTAYDLLNSSLKIEDAVRLAVSENVDALAITDTNVLYGFPKFYDACIANNIKPIFGMTIYVTNGLNTVETVVLAKNNDGLKDLYQLSSEIKMNSMENVSFELLQQFSSNLIIIFKNVADEHRDIVQVFDSHEDTYLDHQSVLVQGIKHVWIQNVCYQTRQDADTISALAAIRDNAKLDLIHDQEDFGAHFLTEKEIKQLDINQEYLTQVDVIAQKCNAELKYHQSLLPQYQTPNDESAKKYLWRVLVTQLKKLELNYDVYLERLKYEYKVITNMGFEDYFLIVSDLIHYAKTNDVMVGPGRGSSAGSLVSYLLGITTIDPIKFNLLFERFLNPERVTMPDIDIDFEDTRRERVIQYVQEKYGELHVSGIVTFGHLLARAVARDVGRIMGFDEVTLNEISSLIPHKLGITLDEAYQIDDFKKFVHRNHRHERWFSICKKLEGLPRHTSTHAAGIIINDHPLYEYAPLTKGDTGLLTQWTMTEAERIGLLKIDFLGLRNLSIIHQILIQVKKDLGINIDIEKIPFDDQKVFELLSQGDTTGIFQLESDGVRSVLKKLKPEHFEDIVAVTSLYRPGPMEEIPTYITRRHDPSKVQYLHPHLEPILKNTYGVIIYQEQIMQIASTFANFSYGEADILRRAMSKKNRAVLESERQHFIEGAKQNGYHEDISKQIFDLILKFADYGFPRAHAVSYSKIAYIMSFLKVHYPNYFYANILSNVIGSEKKTAQMIEEAKKQGITILPPNINESHWFYKPSQEGIYLSIGTIKGVGYQSVKVIVDERYQNGKFKDFFDFARRIPKRVKTRKLLEALILVGAFDAFGKTRSTLLQAIDQVLDGDLNIEQDGFLFDILTPKQMYEDKEELPDALISQYEKEYLGFYVSQHPVDKKFVAKQYLTIFKLSNAQNYKPILVQFDKVKQIRTKNGQNMAFVTLNDGIETLDGVIFPNQFKKYEELLSHNDLFIVSGKFDHRKQQRQLIINEIQTLATFEEQKLAFAKQIIIRNKSQIDMFEEMIKATKENANDVVLSFYDETIKQMTTLGYINQKDSMFNNFIQSFNPSDIRLI</sequence>
<accession>P63979</accession>
<accession>Q99TG0</accession>
<gene>
    <name type="primary">dnaE</name>
    <name type="ordered locus">SAV1703</name>
</gene>
<feature type="chain" id="PRO_0000103340" description="DNA polymerase III subunit alpha">
    <location>
        <begin position="1"/>
        <end position="1065"/>
    </location>
</feature>
<organism>
    <name type="scientific">Staphylococcus aureus (strain Mu50 / ATCC 700699)</name>
    <dbReference type="NCBI Taxonomy" id="158878"/>
    <lineage>
        <taxon>Bacteria</taxon>
        <taxon>Bacillati</taxon>
        <taxon>Bacillota</taxon>
        <taxon>Bacilli</taxon>
        <taxon>Bacillales</taxon>
        <taxon>Staphylococcaceae</taxon>
        <taxon>Staphylococcus</taxon>
    </lineage>
</organism>
<comment type="function">
    <text evidence="1">DNA polymerase III is a complex, multichain enzyme responsible for most of the replicative synthesis in bacteria. This DNA polymerase also exhibits 3' to 5' exonuclease activity. The alpha chain is the DNA polymerase (By similarity).</text>
</comment>
<comment type="catalytic activity">
    <reaction>
        <text>DNA(n) + a 2'-deoxyribonucleoside 5'-triphosphate = DNA(n+1) + diphosphate</text>
        <dbReference type="Rhea" id="RHEA:22508"/>
        <dbReference type="Rhea" id="RHEA-COMP:17339"/>
        <dbReference type="Rhea" id="RHEA-COMP:17340"/>
        <dbReference type="ChEBI" id="CHEBI:33019"/>
        <dbReference type="ChEBI" id="CHEBI:61560"/>
        <dbReference type="ChEBI" id="CHEBI:173112"/>
        <dbReference type="EC" id="2.7.7.7"/>
    </reaction>
</comment>
<comment type="subunit">
    <text evidence="1">DNA polymerase III contains a core (composed of alpha, epsilon and theta chains) that associates with a tau subunit. This core dimerizes to form the PolIII' complex. PolIII' associates with the gamma complex (composed of gamma, delta, delta', psi and chi chains) and with the beta chain to form the complete DNA polymerase III complex (By similarity).</text>
</comment>
<comment type="subcellular location">
    <subcellularLocation>
        <location evidence="1">Cytoplasm</location>
    </subcellularLocation>
</comment>
<comment type="similarity">
    <text evidence="2">Belongs to the DNA polymerase type-C family. DnaE subfamily.</text>
</comment>
<evidence type="ECO:0000250" key="1"/>
<evidence type="ECO:0000305" key="2"/>
<name>DPO3A_STAAM</name>
<protein>
    <recommendedName>
        <fullName>DNA polymerase III subunit alpha</fullName>
        <ecNumber>2.7.7.7</ecNumber>
    </recommendedName>
</protein>
<proteinExistence type="inferred from homology"/>
<dbReference type="EC" id="2.7.7.7"/>
<dbReference type="EMBL" id="BA000017">
    <property type="protein sequence ID" value="BAB57865.1"/>
    <property type="molecule type" value="Genomic_DNA"/>
</dbReference>
<dbReference type="RefSeq" id="WP_000226919.1">
    <property type="nucleotide sequence ID" value="NC_002758.2"/>
</dbReference>
<dbReference type="SMR" id="P63979"/>
<dbReference type="KEGG" id="sav:SAV1703"/>
<dbReference type="HOGENOM" id="CLU_001600_0_0_9"/>
<dbReference type="PhylomeDB" id="P63979"/>
<dbReference type="Proteomes" id="UP000002481">
    <property type="component" value="Chromosome"/>
</dbReference>
<dbReference type="GO" id="GO:0005737">
    <property type="term" value="C:cytoplasm"/>
    <property type="evidence" value="ECO:0007669"/>
    <property type="project" value="UniProtKB-SubCell"/>
</dbReference>
<dbReference type="GO" id="GO:0008408">
    <property type="term" value="F:3'-5' exonuclease activity"/>
    <property type="evidence" value="ECO:0007669"/>
    <property type="project" value="InterPro"/>
</dbReference>
<dbReference type="GO" id="GO:0003887">
    <property type="term" value="F:DNA-directed DNA polymerase activity"/>
    <property type="evidence" value="ECO:0007669"/>
    <property type="project" value="UniProtKB-KW"/>
</dbReference>
<dbReference type="GO" id="GO:0003676">
    <property type="term" value="F:nucleic acid binding"/>
    <property type="evidence" value="ECO:0007669"/>
    <property type="project" value="InterPro"/>
</dbReference>
<dbReference type="GO" id="GO:0006260">
    <property type="term" value="P:DNA replication"/>
    <property type="evidence" value="ECO:0007669"/>
    <property type="project" value="UniProtKB-KW"/>
</dbReference>
<dbReference type="CDD" id="cd04485">
    <property type="entry name" value="DnaE_OBF"/>
    <property type="match status" value="1"/>
</dbReference>
<dbReference type="CDD" id="cd07431">
    <property type="entry name" value="PHP_PolIIIA"/>
    <property type="match status" value="1"/>
</dbReference>
<dbReference type="Gene3D" id="1.10.150.870">
    <property type="match status" value="1"/>
</dbReference>
<dbReference type="Gene3D" id="1.10.10.1600">
    <property type="entry name" value="Bacterial DNA polymerase III alpha subunit, thumb domain"/>
    <property type="match status" value="1"/>
</dbReference>
<dbReference type="Gene3D" id="3.20.20.140">
    <property type="entry name" value="Metal-dependent hydrolases"/>
    <property type="match status" value="1"/>
</dbReference>
<dbReference type="InterPro" id="IPR011708">
    <property type="entry name" value="DNA_pol3_alpha_NTPase_dom"/>
</dbReference>
<dbReference type="InterPro" id="IPR041931">
    <property type="entry name" value="DNA_pol3_alpha_thumb_dom"/>
</dbReference>
<dbReference type="InterPro" id="IPR040982">
    <property type="entry name" value="DNA_pol3_finger"/>
</dbReference>
<dbReference type="InterPro" id="IPR004805">
    <property type="entry name" value="DnaE2/DnaE/PolC"/>
</dbReference>
<dbReference type="InterPro" id="IPR029460">
    <property type="entry name" value="DNAPol_HHH"/>
</dbReference>
<dbReference type="InterPro" id="IPR004365">
    <property type="entry name" value="NA-bd_OB_tRNA"/>
</dbReference>
<dbReference type="InterPro" id="IPR004013">
    <property type="entry name" value="PHP_dom"/>
</dbReference>
<dbReference type="InterPro" id="IPR003141">
    <property type="entry name" value="Pol/His_phosphatase_N"/>
</dbReference>
<dbReference type="InterPro" id="IPR016195">
    <property type="entry name" value="Pol/histidinol_Pase-like"/>
</dbReference>
<dbReference type="NCBIfam" id="TIGR00594">
    <property type="entry name" value="polc"/>
    <property type="match status" value="1"/>
</dbReference>
<dbReference type="PANTHER" id="PTHR32294">
    <property type="entry name" value="DNA POLYMERASE III SUBUNIT ALPHA"/>
    <property type="match status" value="1"/>
</dbReference>
<dbReference type="PANTHER" id="PTHR32294:SF0">
    <property type="entry name" value="DNA POLYMERASE III SUBUNIT ALPHA"/>
    <property type="match status" value="1"/>
</dbReference>
<dbReference type="Pfam" id="PF07733">
    <property type="entry name" value="DNA_pol3_alpha"/>
    <property type="match status" value="1"/>
</dbReference>
<dbReference type="Pfam" id="PF17657">
    <property type="entry name" value="DNA_pol3_finger"/>
    <property type="match status" value="1"/>
</dbReference>
<dbReference type="Pfam" id="PF14579">
    <property type="entry name" value="HHH_6"/>
    <property type="match status" value="1"/>
</dbReference>
<dbReference type="Pfam" id="PF02811">
    <property type="entry name" value="PHP"/>
    <property type="match status" value="1"/>
</dbReference>
<dbReference type="Pfam" id="PF01336">
    <property type="entry name" value="tRNA_anti-codon"/>
    <property type="match status" value="1"/>
</dbReference>
<dbReference type="SMART" id="SM00481">
    <property type="entry name" value="POLIIIAc"/>
    <property type="match status" value="1"/>
</dbReference>
<dbReference type="SUPFAM" id="SSF89550">
    <property type="entry name" value="PHP domain-like"/>
    <property type="match status" value="1"/>
</dbReference>
<keyword id="KW-0963">Cytoplasm</keyword>
<keyword id="KW-0235">DNA replication</keyword>
<keyword id="KW-0239">DNA-directed DNA polymerase</keyword>
<keyword id="KW-0548">Nucleotidyltransferase</keyword>
<keyword id="KW-0808">Transferase</keyword>
<reference key="1">
    <citation type="journal article" date="2001" name="Lancet">
        <title>Whole genome sequencing of meticillin-resistant Staphylococcus aureus.</title>
        <authorList>
            <person name="Kuroda M."/>
            <person name="Ohta T."/>
            <person name="Uchiyama I."/>
            <person name="Baba T."/>
            <person name="Yuzawa H."/>
            <person name="Kobayashi I."/>
            <person name="Cui L."/>
            <person name="Oguchi A."/>
            <person name="Aoki K."/>
            <person name="Nagai Y."/>
            <person name="Lian J.-Q."/>
            <person name="Ito T."/>
            <person name="Kanamori M."/>
            <person name="Matsumaru H."/>
            <person name="Maruyama A."/>
            <person name="Murakami H."/>
            <person name="Hosoyama A."/>
            <person name="Mizutani-Ui Y."/>
            <person name="Takahashi N.K."/>
            <person name="Sawano T."/>
            <person name="Inoue R."/>
            <person name="Kaito C."/>
            <person name="Sekimizu K."/>
            <person name="Hirakawa H."/>
            <person name="Kuhara S."/>
            <person name="Goto S."/>
            <person name="Yabuzaki J."/>
            <person name="Kanehisa M."/>
            <person name="Yamashita A."/>
            <person name="Oshima K."/>
            <person name="Furuya K."/>
            <person name="Yoshino C."/>
            <person name="Shiba T."/>
            <person name="Hattori M."/>
            <person name="Ogasawara N."/>
            <person name="Hayashi H."/>
            <person name="Hiramatsu K."/>
        </authorList>
    </citation>
    <scope>NUCLEOTIDE SEQUENCE [LARGE SCALE GENOMIC DNA]</scope>
    <source>
        <strain>Mu50 / ATCC 700699</strain>
    </source>
</reference>